<sequence>MNVEAKESSVAPAGDHGGAVQDPADVRDRLELLKNKANGETNGATPNGTKSTNAKDPSRPRRKKARRACFACQRAHLTCGDERPCQRCIKRGLQDACHDGVRKKAKYLHDAPDGALMPGVGGNFYNHPMRHNMPLSSNGANAVNATSQQNSGASFYPTPQSNPYNVYQESTLSQNSFPSQSPVSPTFNMKNTATARSNSLSSSVNQPQSNPAASGPPSQSQNPFAGPFFDPSDPALFNFDLSSMNFENRYGALEFGMLGHMATGAGDSPSESATQRGSIGRSGSAQFATTPITGNPGFGESPGNQQPFMFGNDPLLNEWPNNHPPGQGHMNVGGVYPQNSMMAGHLSKADAPHAFAIESGPASFSSPSATTSPHVNGGYDENALSNAVAHKPNGLPTNGQRPAITTPRLKHQSLQLGVKRRHRNPSTVYESVKEPYAYTNRFHNLTAFIQRRFSSQKTLQIAKALASIRPSFIATTKTLNRDDLIFMEKCFQRTLWEYEDFINACGTPTIVCRRTGEIAAVGKEFSILTGWKKDVLLGKEPNLNVNTGGTSIPQSGTSSRGSFTPRISTLEQANPARPQPVFLAELLDDDSVVDFYEDFARLAFGDSRGSVMTTCKLLKYKTKEDMELAQSDDNQRWNNHLRKGGIAGEAGMNQLGFKDGKVECAYCWTVKRDVFDIPMLIVMNYLIPSDGFKSSIPF</sequence>
<dbReference type="EMBL" id="DS027045">
    <property type="protein sequence ID" value="EAW13823.1"/>
    <property type="molecule type" value="Genomic_DNA"/>
</dbReference>
<dbReference type="RefSeq" id="XP_001275249.1">
    <property type="nucleotide sequence ID" value="XM_001275248.1"/>
</dbReference>
<dbReference type="SMR" id="A1C602"/>
<dbReference type="STRING" id="344612.A1C602"/>
<dbReference type="EnsemblFungi" id="EAW13823">
    <property type="protein sequence ID" value="EAW13823"/>
    <property type="gene ID" value="ACLA_068510"/>
</dbReference>
<dbReference type="KEGG" id="act:ACLA_068510"/>
<dbReference type="VEuPathDB" id="FungiDB:ACLA_068510"/>
<dbReference type="eggNOG" id="ENOG502R1M5">
    <property type="taxonomic scope" value="Eukaryota"/>
</dbReference>
<dbReference type="HOGENOM" id="CLU_010748_1_0_1"/>
<dbReference type="OMA" id="VMTTCKL"/>
<dbReference type="OrthoDB" id="2538135at2759"/>
<dbReference type="Proteomes" id="UP000006701">
    <property type="component" value="Unassembled WGS sequence"/>
</dbReference>
<dbReference type="GO" id="GO:0005634">
    <property type="term" value="C:nucleus"/>
    <property type="evidence" value="ECO:0007669"/>
    <property type="project" value="UniProtKB-SubCell"/>
</dbReference>
<dbReference type="GO" id="GO:0000981">
    <property type="term" value="F:DNA-binding transcription factor activity, RNA polymerase II-specific"/>
    <property type="evidence" value="ECO:0007669"/>
    <property type="project" value="InterPro"/>
</dbReference>
<dbReference type="GO" id="GO:0000977">
    <property type="term" value="F:RNA polymerase II transcription regulatory region sequence-specific DNA binding"/>
    <property type="evidence" value="ECO:0007669"/>
    <property type="project" value="TreeGrafter"/>
</dbReference>
<dbReference type="GO" id="GO:0008270">
    <property type="term" value="F:zinc ion binding"/>
    <property type="evidence" value="ECO:0007669"/>
    <property type="project" value="InterPro"/>
</dbReference>
<dbReference type="GO" id="GO:0009267">
    <property type="term" value="P:cellular response to starvation"/>
    <property type="evidence" value="ECO:0007669"/>
    <property type="project" value="TreeGrafter"/>
</dbReference>
<dbReference type="GO" id="GO:0006094">
    <property type="term" value="P:gluconeogenesis"/>
    <property type="evidence" value="ECO:0007669"/>
    <property type="project" value="UniProtKB-KW"/>
</dbReference>
<dbReference type="CDD" id="cd00067">
    <property type="entry name" value="GAL4"/>
    <property type="match status" value="1"/>
</dbReference>
<dbReference type="Gene3D" id="4.10.240.10">
    <property type="entry name" value="Zn(2)-C6 fungal-type DNA-binding domain"/>
    <property type="match status" value="1"/>
</dbReference>
<dbReference type="InterPro" id="IPR050335">
    <property type="entry name" value="ERT1_acuK_gluconeogen_tf"/>
</dbReference>
<dbReference type="InterPro" id="IPR056751">
    <property type="entry name" value="PAS_13"/>
</dbReference>
<dbReference type="InterPro" id="IPR036864">
    <property type="entry name" value="Zn2-C6_fun-type_DNA-bd_sf"/>
</dbReference>
<dbReference type="InterPro" id="IPR001138">
    <property type="entry name" value="Zn2Cys6_DnaBD"/>
</dbReference>
<dbReference type="PANTHER" id="PTHR47659:SF1">
    <property type="entry name" value="TRANSCRIPTION ACTIVATOR OF GLUCONEOGENESIS ERT1"/>
    <property type="match status" value="1"/>
</dbReference>
<dbReference type="PANTHER" id="PTHR47659">
    <property type="entry name" value="ZN(II)2CYS6 TRANSCRIPTION FACTOR (EUROFUNG)-RELATED"/>
    <property type="match status" value="1"/>
</dbReference>
<dbReference type="Pfam" id="PF24990">
    <property type="entry name" value="PAS_13"/>
    <property type="match status" value="1"/>
</dbReference>
<dbReference type="SMART" id="SM00066">
    <property type="entry name" value="GAL4"/>
    <property type="match status" value="1"/>
</dbReference>
<dbReference type="SUPFAM" id="SSF57701">
    <property type="entry name" value="Zn2/Cys6 DNA-binding domain"/>
    <property type="match status" value="1"/>
</dbReference>
<dbReference type="PROSITE" id="PS50048">
    <property type="entry name" value="ZN2_CY6_FUNGAL_2"/>
    <property type="match status" value="1"/>
</dbReference>
<accession>A1C602</accession>
<keyword id="KW-0010">Activator</keyword>
<keyword id="KW-0238">DNA-binding</keyword>
<keyword id="KW-0312">Gluconeogenesis</keyword>
<keyword id="KW-0479">Metal-binding</keyword>
<keyword id="KW-0539">Nucleus</keyword>
<keyword id="KW-1185">Reference proteome</keyword>
<keyword id="KW-0804">Transcription</keyword>
<keyword id="KW-0805">Transcription regulation</keyword>
<keyword id="KW-0862">Zinc</keyword>
<reference key="1">
    <citation type="journal article" date="2008" name="PLoS Genet.">
        <title>Genomic islands in the pathogenic filamentous fungus Aspergillus fumigatus.</title>
        <authorList>
            <person name="Fedorova N.D."/>
            <person name="Khaldi N."/>
            <person name="Joardar V.S."/>
            <person name="Maiti R."/>
            <person name="Amedeo P."/>
            <person name="Anderson M.J."/>
            <person name="Crabtree J."/>
            <person name="Silva J.C."/>
            <person name="Badger J.H."/>
            <person name="Albarraq A."/>
            <person name="Angiuoli S."/>
            <person name="Bussey H."/>
            <person name="Bowyer P."/>
            <person name="Cotty P.J."/>
            <person name="Dyer P.S."/>
            <person name="Egan A."/>
            <person name="Galens K."/>
            <person name="Fraser-Liggett C.M."/>
            <person name="Haas B.J."/>
            <person name="Inman J.M."/>
            <person name="Kent R."/>
            <person name="Lemieux S."/>
            <person name="Malavazi I."/>
            <person name="Orvis J."/>
            <person name="Roemer T."/>
            <person name="Ronning C.M."/>
            <person name="Sundaram J.P."/>
            <person name="Sutton G."/>
            <person name="Turner G."/>
            <person name="Venter J.C."/>
            <person name="White O.R."/>
            <person name="Whitty B.R."/>
            <person name="Youngman P."/>
            <person name="Wolfe K.H."/>
            <person name="Goldman G.H."/>
            <person name="Wortman J.R."/>
            <person name="Jiang B."/>
            <person name="Denning D.W."/>
            <person name="Nierman W.C."/>
        </authorList>
    </citation>
    <scope>NUCLEOTIDE SEQUENCE [LARGE SCALE GENOMIC DNA]</scope>
    <source>
        <strain>ATCC 1007 / CBS 513.65 / DSM 816 / NCTC 3887 / NRRL 1 / QM 1276 / 107</strain>
    </source>
</reference>
<gene>
    <name type="primary">acuK</name>
    <name type="ORF">AN7468</name>
</gene>
<comment type="function">
    <text evidence="1">Transcription factor which regulates nonfermentable carbon utilization. Activator of gluconeogenetic genes (By similarity).</text>
</comment>
<comment type="subcellular location">
    <subcellularLocation>
        <location evidence="2">Nucleus</location>
    </subcellularLocation>
</comment>
<comment type="similarity">
    <text evidence="4">Belongs to the ERT1/acuK family.</text>
</comment>
<protein>
    <recommendedName>
        <fullName>Transcription activator of gluconeogenesis acuK</fullName>
    </recommendedName>
</protein>
<proteinExistence type="inferred from homology"/>
<evidence type="ECO:0000250" key="1"/>
<evidence type="ECO:0000255" key="2">
    <source>
        <dbReference type="PROSITE-ProRule" id="PRU00227"/>
    </source>
</evidence>
<evidence type="ECO:0000256" key="3">
    <source>
        <dbReference type="SAM" id="MobiDB-lite"/>
    </source>
</evidence>
<evidence type="ECO:0000305" key="4"/>
<organism>
    <name type="scientific">Aspergillus clavatus (strain ATCC 1007 / CBS 513.65 / DSM 816 / NCTC 3887 / NRRL 1 / QM 1276 / 107)</name>
    <dbReference type="NCBI Taxonomy" id="344612"/>
    <lineage>
        <taxon>Eukaryota</taxon>
        <taxon>Fungi</taxon>
        <taxon>Dikarya</taxon>
        <taxon>Ascomycota</taxon>
        <taxon>Pezizomycotina</taxon>
        <taxon>Eurotiomycetes</taxon>
        <taxon>Eurotiomycetidae</taxon>
        <taxon>Eurotiales</taxon>
        <taxon>Aspergillaceae</taxon>
        <taxon>Aspergillus</taxon>
        <taxon>Aspergillus subgen. Fumigati</taxon>
    </lineage>
</organism>
<feature type="chain" id="PRO_0000406430" description="Transcription activator of gluconeogenesis acuK">
    <location>
        <begin position="1"/>
        <end position="698"/>
    </location>
</feature>
<feature type="DNA-binding region" description="Zn(2)-C6 fungal-type" evidence="2">
    <location>
        <begin position="69"/>
        <end position="97"/>
    </location>
</feature>
<feature type="region of interest" description="Disordered" evidence="3">
    <location>
        <begin position="1"/>
        <end position="62"/>
    </location>
</feature>
<feature type="region of interest" description="Disordered" evidence="3">
    <location>
        <begin position="137"/>
        <end position="229"/>
    </location>
</feature>
<feature type="region of interest" description="Disordered" evidence="3">
    <location>
        <begin position="264"/>
        <end position="305"/>
    </location>
</feature>
<feature type="region of interest" description="Disordered" evidence="3">
    <location>
        <begin position="388"/>
        <end position="422"/>
    </location>
</feature>
<feature type="compositionally biased region" description="Basic and acidic residues" evidence="3">
    <location>
        <begin position="24"/>
        <end position="34"/>
    </location>
</feature>
<feature type="compositionally biased region" description="Polar residues" evidence="3">
    <location>
        <begin position="38"/>
        <end position="55"/>
    </location>
</feature>
<feature type="compositionally biased region" description="Polar residues" evidence="3">
    <location>
        <begin position="137"/>
        <end position="223"/>
    </location>
</feature>
<feature type="compositionally biased region" description="Polar residues" evidence="3">
    <location>
        <begin position="269"/>
        <end position="293"/>
    </location>
</feature>
<name>ACUK_ASPCL</name>